<sequence length="142" mass="16247">MMSFVSLLLVGILFHATQAEQLTKCEVFRELKDLKGYGGVSLPEWVCTTFHTSGYDTQAIVQNNDSTEYGLFQINNKIWCKDDQNPHSSNICNISCDKFLDDDLTDDIMCVKKILDKVGINYWLAHKALCSEKLDQWLCEKL</sequence>
<dbReference type="EMBL" id="X06366">
    <property type="protein sequence ID" value="CAA29664.1"/>
    <property type="molecule type" value="Genomic_DNA"/>
</dbReference>
<dbReference type="EMBL" id="M18780">
    <property type="protein sequence ID" value="AAA30615.1"/>
    <property type="molecule type" value="mRNA"/>
</dbReference>
<dbReference type="EMBL" id="J05147">
    <property type="protein sequence ID" value="AAA30367.1"/>
    <property type="molecule type" value="mRNA"/>
</dbReference>
<dbReference type="EMBL" id="AB052163">
    <property type="protein sequence ID" value="BAB18921.1"/>
    <property type="molecule type" value="Genomic_DNA"/>
</dbReference>
<dbReference type="EMBL" id="AB052164">
    <property type="protein sequence ID" value="BAB18922.1"/>
    <property type="molecule type" value="Genomic_DNA"/>
</dbReference>
<dbReference type="EMBL" id="AB052165">
    <property type="protein sequence ID" value="BAB18923.1"/>
    <property type="molecule type" value="Genomic_DNA"/>
</dbReference>
<dbReference type="EMBL" id="AB052166">
    <property type="protein sequence ID" value="BAB18924.1"/>
    <property type="molecule type" value="Genomic_DNA"/>
</dbReference>
<dbReference type="EMBL" id="AB052167">
    <property type="protein sequence ID" value="BAB18925.1"/>
    <property type="molecule type" value="Genomic_DNA"/>
</dbReference>
<dbReference type="EMBL" id="AF249896">
    <property type="protein sequence ID" value="AAF63624.1"/>
    <property type="molecule type" value="Genomic_DNA"/>
</dbReference>
<dbReference type="EMBL" id="BT025469">
    <property type="protein sequence ID" value="ABF57425.1"/>
    <property type="molecule type" value="mRNA"/>
</dbReference>
<dbReference type="EMBL" id="BC102173">
    <property type="protein sequence ID" value="AAI02174.1"/>
    <property type="molecule type" value="mRNA"/>
</dbReference>
<dbReference type="EMBL" id="M90645">
    <property type="protein sequence ID" value="AAA30614.1"/>
    <property type="molecule type" value="Genomic_DNA"/>
</dbReference>
<dbReference type="PIR" id="A27360">
    <property type="entry name" value="LABO"/>
</dbReference>
<dbReference type="RefSeq" id="NP_776803.1">
    <property type="nucleotide sequence ID" value="NM_174378.2"/>
</dbReference>
<dbReference type="PDB" id="1F6R">
    <property type="method" value="X-ray"/>
    <property type="resolution" value="2.20 A"/>
    <property type="chains" value="A/B/C/D/E/F=20-142"/>
</dbReference>
<dbReference type="PDB" id="1F6S">
    <property type="method" value="X-ray"/>
    <property type="resolution" value="2.20 A"/>
    <property type="chains" value="A/B/C/D/E/F=20-142"/>
</dbReference>
<dbReference type="PDB" id="1HFZ">
    <property type="method" value="X-ray"/>
    <property type="resolution" value="2.30 A"/>
    <property type="chains" value="A/B/C/D=20-142"/>
</dbReference>
<dbReference type="PDB" id="2G4N">
    <property type="method" value="X-ray"/>
    <property type="resolution" value="2.30 A"/>
    <property type="chains" value="A/B/C/D/E/F=20-142"/>
</dbReference>
<dbReference type="PDB" id="6IP9">
    <property type="method" value="X-ray"/>
    <property type="resolution" value="1.85 A"/>
    <property type="chains" value="A=20-142"/>
</dbReference>
<dbReference type="PDB" id="7EKA">
    <property type="method" value="X-ray"/>
    <property type="resolution" value="1.20 A"/>
    <property type="chains" value="A=20-140"/>
</dbReference>
<dbReference type="PDB" id="7WQG">
    <property type="method" value="X-ray"/>
    <property type="resolution" value="2.50 A"/>
    <property type="chains" value="A/B/C/D/E/F=20-140"/>
</dbReference>
<dbReference type="PDBsum" id="1F6R"/>
<dbReference type="PDBsum" id="1F6S"/>
<dbReference type="PDBsum" id="1HFZ"/>
<dbReference type="PDBsum" id="2G4N"/>
<dbReference type="PDBsum" id="6IP9"/>
<dbReference type="PDBsum" id="7EKA"/>
<dbReference type="PDBsum" id="7WQG"/>
<dbReference type="BMRB" id="P00711"/>
<dbReference type="SMR" id="P00711"/>
<dbReference type="BioGRID" id="159201">
    <property type="interactions" value="1"/>
</dbReference>
<dbReference type="FunCoup" id="P00711">
    <property type="interactions" value="75"/>
</dbReference>
<dbReference type="IntAct" id="P00711">
    <property type="interactions" value="3"/>
</dbReference>
<dbReference type="MINT" id="P00711"/>
<dbReference type="STRING" id="9913.ENSBTAP00000060771"/>
<dbReference type="Allergome" id="163">
    <property type="allergen name" value="Bos d 4"/>
</dbReference>
<dbReference type="Allergome" id="3165">
    <property type="allergen name" value="Bos d 4.0101"/>
</dbReference>
<dbReference type="CarbonylDB" id="P00711"/>
<dbReference type="GlyCosmos" id="P00711">
    <property type="glycosylation" value="1 site, No reported glycans"/>
</dbReference>
<dbReference type="GlyGen" id="P00711">
    <property type="glycosylation" value="2 sites, 1 O-linked glycan (1 site)"/>
</dbReference>
<dbReference type="iPTMnet" id="P00711"/>
<dbReference type="PaxDb" id="9913-ENSBTAP00000007701"/>
<dbReference type="PeptideAtlas" id="P00711"/>
<dbReference type="GeneID" id="281894"/>
<dbReference type="KEGG" id="bta:281894"/>
<dbReference type="CTD" id="3906"/>
<dbReference type="eggNOG" id="ENOG502T8BJ">
    <property type="taxonomic scope" value="Eukaryota"/>
</dbReference>
<dbReference type="HOGENOM" id="CLU_111620_0_1_1"/>
<dbReference type="InParanoid" id="P00711"/>
<dbReference type="OrthoDB" id="17373at2759"/>
<dbReference type="TreeFam" id="TF324882"/>
<dbReference type="EvolutionaryTrace" id="P00711"/>
<dbReference type="Proteomes" id="UP000009136">
    <property type="component" value="Unplaced"/>
</dbReference>
<dbReference type="GO" id="GO:0005615">
    <property type="term" value="C:extracellular space"/>
    <property type="evidence" value="ECO:0000314"/>
    <property type="project" value="AgBase"/>
</dbReference>
<dbReference type="GO" id="GO:0005509">
    <property type="term" value="F:calcium ion binding"/>
    <property type="evidence" value="ECO:0007669"/>
    <property type="project" value="InterPro"/>
</dbReference>
<dbReference type="GO" id="GO:0042802">
    <property type="term" value="F:identical protein binding"/>
    <property type="evidence" value="ECO:0000353"/>
    <property type="project" value="IntAct"/>
</dbReference>
<dbReference type="GO" id="GO:0004461">
    <property type="term" value="F:lactose synthase activity"/>
    <property type="evidence" value="ECO:0007669"/>
    <property type="project" value="InterPro"/>
</dbReference>
<dbReference type="GO" id="GO:0003796">
    <property type="term" value="F:lysozyme activity"/>
    <property type="evidence" value="ECO:0000318"/>
    <property type="project" value="GO_Central"/>
</dbReference>
<dbReference type="GO" id="GO:0050829">
    <property type="term" value="P:defense response to Gram-negative bacterium"/>
    <property type="evidence" value="ECO:0000318"/>
    <property type="project" value="GO_Central"/>
</dbReference>
<dbReference type="GO" id="GO:0050830">
    <property type="term" value="P:defense response to Gram-positive bacterium"/>
    <property type="evidence" value="ECO:0000318"/>
    <property type="project" value="GO_Central"/>
</dbReference>
<dbReference type="GO" id="GO:0005989">
    <property type="term" value="P:lactose biosynthetic process"/>
    <property type="evidence" value="ECO:0007669"/>
    <property type="project" value="UniProtKB-KW"/>
</dbReference>
<dbReference type="GO" id="GO:1903496">
    <property type="term" value="P:response to 11-deoxycorticosterone"/>
    <property type="evidence" value="ECO:0000314"/>
    <property type="project" value="AgBase"/>
</dbReference>
<dbReference type="GO" id="GO:1903494">
    <property type="term" value="P:response to dehydroepiandrosterone"/>
    <property type="evidence" value="ECO:0000314"/>
    <property type="project" value="AgBase"/>
</dbReference>
<dbReference type="GO" id="GO:0032355">
    <property type="term" value="P:response to estradiol"/>
    <property type="evidence" value="ECO:0000314"/>
    <property type="project" value="AgBase"/>
</dbReference>
<dbReference type="GO" id="GO:0032570">
    <property type="term" value="P:response to progesterone"/>
    <property type="evidence" value="ECO:0000314"/>
    <property type="project" value="AgBase"/>
</dbReference>
<dbReference type="CDD" id="cd16898">
    <property type="entry name" value="LYZ_LA"/>
    <property type="match status" value="1"/>
</dbReference>
<dbReference type="FunFam" id="1.10.530.10:FF:000014">
    <property type="entry name" value="Alpha-lactalbumin"/>
    <property type="match status" value="1"/>
</dbReference>
<dbReference type="Gene3D" id="1.10.530.10">
    <property type="match status" value="1"/>
</dbReference>
<dbReference type="InterPro" id="IPR001916">
    <property type="entry name" value="Glyco_hydro_22"/>
</dbReference>
<dbReference type="InterPro" id="IPR019799">
    <property type="entry name" value="Glyco_hydro_22_CS"/>
</dbReference>
<dbReference type="InterPro" id="IPR000545">
    <property type="entry name" value="Lactalbumin"/>
</dbReference>
<dbReference type="InterPro" id="IPR023346">
    <property type="entry name" value="Lysozyme-like_dom_sf"/>
</dbReference>
<dbReference type="PANTHER" id="PTHR11407:SF32">
    <property type="entry name" value="ALPHA-LACTALBUMIN"/>
    <property type="match status" value="1"/>
</dbReference>
<dbReference type="PANTHER" id="PTHR11407">
    <property type="entry name" value="LYSOZYME C"/>
    <property type="match status" value="1"/>
</dbReference>
<dbReference type="Pfam" id="PF00062">
    <property type="entry name" value="Lys"/>
    <property type="match status" value="1"/>
</dbReference>
<dbReference type="PRINTS" id="PR00136">
    <property type="entry name" value="LACTALBUMIN"/>
</dbReference>
<dbReference type="PRINTS" id="PR00135">
    <property type="entry name" value="LYZLACT"/>
</dbReference>
<dbReference type="SMART" id="SM00263">
    <property type="entry name" value="LYZ1"/>
    <property type="match status" value="1"/>
</dbReference>
<dbReference type="SUPFAM" id="SSF53955">
    <property type="entry name" value="Lysozyme-like"/>
    <property type="match status" value="1"/>
</dbReference>
<dbReference type="PROSITE" id="PS00128">
    <property type="entry name" value="GLYCOSYL_HYDROL_F22_1"/>
    <property type="match status" value="1"/>
</dbReference>
<dbReference type="PROSITE" id="PS51348">
    <property type="entry name" value="GLYCOSYL_HYDROL_F22_2"/>
    <property type="match status" value="1"/>
</dbReference>
<comment type="function">
    <text>Regulatory subunit of lactose synthase, changes the substrate specificity of galactosyltransferase in the mammary gland making glucose a good acceptor substrate for this enzyme. This enables LS to synthesize lactose, the major carbohydrate component of milk. In other tissues, galactosyltransferase transfers galactose onto the N-acetylglucosamine of the oligosaccharide chains in glycoproteins.</text>
</comment>
<comment type="subunit">
    <text>Lactose synthase (LS) is a heterodimer of a catalytic component, beta1,4-galactosyltransferase (beta4Gal-T1) and a regulatory component, alpha-lactalbumin (LA).</text>
</comment>
<comment type="interaction">
    <interactant intactId="EBI-7080486">
        <id>P00711</id>
    </interactant>
    <interactant intactId="EBI-7080486">
        <id>P00711</id>
        <label>LALBA</label>
    </interactant>
    <organismsDiffer>false</organismsDiffer>
    <experiments>3</experiments>
</comment>
<comment type="subcellular location">
    <subcellularLocation>
        <location>Secreted</location>
    </subcellularLocation>
</comment>
<comment type="tissue specificity">
    <text>Mammary gland specific. Secreted in milk.</text>
</comment>
<comment type="allergen">
    <text>Causes an allergic reaction in human. Is one of the causes of cow's milk allergy.</text>
</comment>
<comment type="similarity">
    <text evidence="2">Belongs to the glycosyl hydrolase 22 family.</text>
</comment>
<feature type="signal peptide" evidence="3">
    <location>
        <begin position="1"/>
        <end position="19"/>
    </location>
</feature>
<feature type="chain" id="PRO_0000018439" description="Alpha-lactalbumin">
    <location>
        <begin position="20"/>
        <end position="142"/>
    </location>
</feature>
<feature type="domain" description="C-type lysozyme" evidence="2">
    <location>
        <begin position="20"/>
        <end position="142"/>
    </location>
</feature>
<feature type="binding site" evidence="5 7">
    <location>
        <position position="98"/>
    </location>
    <ligand>
        <name>Ca(2+)</name>
        <dbReference type="ChEBI" id="CHEBI:29108"/>
    </ligand>
</feature>
<feature type="binding site" evidence="5 7">
    <location>
        <position position="101"/>
    </location>
    <ligand>
        <name>Ca(2+)</name>
        <dbReference type="ChEBI" id="CHEBI:29108"/>
    </ligand>
</feature>
<feature type="binding site" evidence="5 7">
    <location>
        <position position="103"/>
    </location>
    <ligand>
        <name>Ca(2+)</name>
        <dbReference type="ChEBI" id="CHEBI:29108"/>
    </ligand>
</feature>
<feature type="binding site" evidence="5 7">
    <location>
        <position position="106"/>
    </location>
    <ligand>
        <name>Ca(2+)</name>
        <dbReference type="ChEBI" id="CHEBI:29108"/>
    </ligand>
</feature>
<feature type="binding site" evidence="5 7">
    <location>
        <position position="107"/>
    </location>
    <ligand>
        <name>Ca(2+)</name>
        <dbReference type="ChEBI" id="CHEBI:29108"/>
    </ligand>
</feature>
<feature type="glycosylation site" description="N-linked (GlcNAc...) asparagine" evidence="1">
    <location>
        <position position="64"/>
    </location>
</feature>
<feature type="disulfide bond" evidence="2 4">
    <location>
        <begin position="25"/>
        <end position="139"/>
    </location>
</feature>
<feature type="disulfide bond" evidence="2 4">
    <location>
        <begin position="47"/>
        <end position="130"/>
    </location>
</feature>
<feature type="disulfide bond" evidence="2 4">
    <location>
        <begin position="80"/>
        <end position="96"/>
    </location>
</feature>
<feature type="disulfide bond" evidence="2 4">
    <location>
        <begin position="92"/>
        <end position="110"/>
    </location>
</feature>
<feature type="sequence variant" description="In an allele of Droughtmaster cattle; an Australian breed.">
    <original>R</original>
    <variation>Q</variation>
    <location>
        <position position="29"/>
    </location>
</feature>
<feature type="sequence conflict" description="In Ref. 1 and 5." evidence="6" ref="1 5">
    <original>T</original>
    <variation>A</variation>
    <location>
        <position position="49"/>
    </location>
</feature>
<feature type="sequence conflict" description="In Ref. 8; AA sequence." evidence="6" ref="8">
    <original>Q</original>
    <variation>E</variation>
    <location>
        <position position="58"/>
    </location>
</feature>
<feature type="sequence conflict" description="In Ref. 8; AA sequence." evidence="6" ref="8">
    <original>DDQN</original>
    <variation>NDQD</variation>
    <location>
        <begin position="82"/>
        <end position="85"/>
    </location>
</feature>
<feature type="helix" evidence="9">
    <location>
        <begin position="24"/>
        <end position="30"/>
    </location>
</feature>
<feature type="helix" evidence="9">
    <location>
        <begin position="32"/>
        <end position="34"/>
    </location>
</feature>
<feature type="helix" evidence="9">
    <location>
        <begin position="37"/>
        <end position="39"/>
    </location>
</feature>
<feature type="helix" evidence="9">
    <location>
        <begin position="42"/>
        <end position="53"/>
    </location>
</feature>
<feature type="strand" evidence="9">
    <location>
        <begin position="60"/>
        <end position="62"/>
    </location>
</feature>
<feature type="strand" evidence="9">
    <location>
        <begin position="67"/>
        <end position="69"/>
    </location>
</feature>
<feature type="turn" evidence="9">
    <location>
        <begin position="70"/>
        <end position="73"/>
    </location>
</feature>
<feature type="turn" evidence="9">
    <location>
        <begin position="76"/>
        <end position="79"/>
    </location>
</feature>
<feature type="strand" evidence="8">
    <location>
        <begin position="80"/>
        <end position="82"/>
    </location>
</feature>
<feature type="helix" evidence="9">
    <location>
        <begin position="96"/>
        <end position="99"/>
    </location>
</feature>
<feature type="strand" evidence="9">
    <location>
        <begin position="100"/>
        <end position="102"/>
    </location>
</feature>
<feature type="helix" evidence="9">
    <location>
        <begin position="105"/>
        <end position="117"/>
    </location>
</feature>
<feature type="helix" evidence="9">
    <location>
        <begin position="120"/>
        <end position="122"/>
    </location>
</feature>
<feature type="helix" evidence="9">
    <location>
        <begin position="125"/>
        <end position="129"/>
    </location>
</feature>
<feature type="strand" evidence="9">
    <location>
        <begin position="130"/>
        <end position="132"/>
    </location>
</feature>
<feature type="helix" evidence="9">
    <location>
        <begin position="134"/>
        <end position="136"/>
    </location>
</feature>
<proteinExistence type="evidence at protein level"/>
<gene>
    <name type="primary">LALBA</name>
    <name type="synonym">ALACTA</name>
</gene>
<accession>P00711</accession>
<accession>Q3T111</accession>
<accession>Q95NE4</accession>
<name>LALBA_BOVIN</name>
<organism>
    <name type="scientific">Bos taurus</name>
    <name type="common">Bovine</name>
    <dbReference type="NCBI Taxonomy" id="9913"/>
    <lineage>
        <taxon>Eukaryota</taxon>
        <taxon>Metazoa</taxon>
        <taxon>Chordata</taxon>
        <taxon>Craniata</taxon>
        <taxon>Vertebrata</taxon>
        <taxon>Euteleostomi</taxon>
        <taxon>Mammalia</taxon>
        <taxon>Eutheria</taxon>
        <taxon>Laurasiatheria</taxon>
        <taxon>Artiodactyla</taxon>
        <taxon>Ruminantia</taxon>
        <taxon>Pecora</taxon>
        <taxon>Bovidae</taxon>
        <taxon>Bovinae</taxon>
        <taxon>Bos</taxon>
    </lineage>
</organism>
<keyword id="KW-0002">3D-structure</keyword>
<keyword id="KW-0020">Allergen</keyword>
<keyword id="KW-0106">Calcium</keyword>
<keyword id="KW-0903">Direct protein sequencing</keyword>
<keyword id="KW-1015">Disulfide bond</keyword>
<keyword id="KW-0325">Glycoprotein</keyword>
<keyword id="KW-0422">Lactose biosynthesis</keyword>
<keyword id="KW-0479">Metal-binding</keyword>
<keyword id="KW-0494">Milk protein</keyword>
<keyword id="KW-1185">Reference proteome</keyword>
<keyword id="KW-0964">Secreted</keyword>
<keyword id="KW-0732">Signal</keyword>
<protein>
    <recommendedName>
        <fullName>Alpha-lactalbumin</fullName>
    </recommendedName>
    <alternativeName>
        <fullName>Lactose synthase B protein</fullName>
    </alternativeName>
    <allergenName>Bos d 4</allergenName>
</protein>
<evidence type="ECO:0000255" key="1"/>
<evidence type="ECO:0000255" key="2">
    <source>
        <dbReference type="PROSITE-ProRule" id="PRU00680"/>
    </source>
</evidence>
<evidence type="ECO:0000269" key="3">
    <source>
    </source>
</evidence>
<evidence type="ECO:0000269" key="4">
    <source>
    </source>
</evidence>
<evidence type="ECO:0000269" key="5">
    <source>
    </source>
</evidence>
<evidence type="ECO:0000305" key="6"/>
<evidence type="ECO:0007744" key="7">
    <source>
        <dbReference type="PDB" id="1HFZ"/>
    </source>
</evidence>
<evidence type="ECO:0007829" key="8">
    <source>
        <dbReference type="PDB" id="1HFZ"/>
    </source>
</evidence>
<evidence type="ECO:0007829" key="9">
    <source>
        <dbReference type="PDB" id="7EKA"/>
    </source>
</evidence>
<reference key="1">
    <citation type="journal article" date="1987" name="Biochimie">
        <title>Complete nucleotide sequence of bovine alpha-lactalbumin gene: comparison with its rat counterpart.</title>
        <authorList>
            <person name="Vilotte J.-L."/>
            <person name="Soulier S."/>
            <person name="Mercier J.-C."/>
            <person name="Gaye P."/>
            <person name="Hue-Delahaie D."/>
            <person name="Furet J.-P."/>
        </authorList>
    </citation>
    <scope>NUCLEOTIDE SEQUENCE [GENOMIC DNA]</scope>
</reference>
<reference key="2">
    <citation type="journal article" date="1987" name="Gene">
        <title>Molecular cloning and nucleotide sequence of a bovine alpha-lactalbumin cDNA.</title>
        <authorList>
            <person name="Hurley W.L."/>
            <person name="Schuler L.A."/>
        </authorList>
    </citation>
    <scope>NUCLEOTIDE SEQUENCE [MRNA]</scope>
</reference>
<reference key="3">
    <citation type="journal article" date="1989" name="J. Biol. Chem.">
        <title>Recombinant bovine alpha-lactalbumin obtained by limited proteolysis of a fusion protein expressed at high levels in Escherichia coli.</title>
        <authorList>
            <person name="Wang M."/>
            <person name="Scott W.A."/>
            <person name="Rao K.R."/>
            <person name="Udey J."/>
            <person name="Conner G.E."/>
            <person name="Brew K."/>
        </authorList>
    </citation>
    <scope>NUCLEOTIDE SEQUENCE [MRNA]</scope>
</reference>
<reference key="4">
    <citation type="submission" date="2000-12" db="EMBL/GenBank/DDBJ databases">
        <title>Bos taurus alpha lactalbumin gene.</title>
        <authorList>
            <person name="Yamamoto N."/>
        </authorList>
    </citation>
    <scope>NUCLEOTIDE SEQUENCE [GENOMIC DNA]</scope>
    <source>
        <strain>Angus</strain>
        <strain>Hereford</strain>
        <strain>Holstein</strain>
        <strain>Japanese black</strain>
        <strain>Jersey</strain>
        <tissue>Blood</tissue>
    </source>
</reference>
<reference key="5">
    <citation type="submission" date="2000-03" db="EMBL/GenBank/DDBJ databases">
        <title>Bovine gene for alpha lactalbumin.</title>
        <authorList>
            <person name="Dhinakar Raj G."/>
            <person name="Kumanan K."/>
        </authorList>
    </citation>
    <scope>NUCLEOTIDE SEQUENCE [GENOMIC DNA]</scope>
</reference>
<reference key="6">
    <citation type="journal article" date="2005" name="BMC Genomics">
        <title>Characterization of 954 bovine full-CDS cDNA sequences.</title>
        <authorList>
            <person name="Harhay G.P."/>
            <person name="Sonstegard T.S."/>
            <person name="Keele J.W."/>
            <person name="Heaton M.P."/>
            <person name="Clawson M.L."/>
            <person name="Snelling W.M."/>
            <person name="Wiedmann R.T."/>
            <person name="Van Tassell C.P."/>
            <person name="Smith T.P.L."/>
        </authorList>
    </citation>
    <scope>NUCLEOTIDE SEQUENCE [LARGE SCALE MRNA]</scope>
</reference>
<reference key="7">
    <citation type="submission" date="2005-08" db="EMBL/GenBank/DDBJ databases">
        <authorList>
            <consortium name="NIH - Mammalian Gene Collection (MGC) project"/>
        </authorList>
    </citation>
    <scope>NUCLEOTIDE SEQUENCE [LARGE SCALE MRNA]</scope>
    <source>
        <strain>Hereford</strain>
        <tissue>Mammary gland</tissue>
    </source>
</reference>
<reference key="8">
    <citation type="journal article" date="1970" name="J. Biol. Chem.">
        <title>The complete amino acid sequence of bovine alpha-lactalbumin.</title>
        <authorList>
            <person name="Brew K."/>
            <person name="Castellino F.J."/>
            <person name="Vanaman T.C."/>
            <person name="Hill R.L."/>
        </authorList>
    </citation>
    <scope>PROTEIN SEQUENCE OF 20-142</scope>
</reference>
<reference key="9">
    <citation type="journal article" date="1984" name="J. Biol. Chem.">
        <title>Evolution of alpha-lactalbumins. The complete amino acid sequence of the alpha-lactalbumin from a marsupial (Macropus rufogriseus) and corrections to regions of sequence in bovine and goat alpha-lactalbumins.</title>
        <authorList>
            <person name="Shewale J.G."/>
            <person name="Sinha S.K."/>
            <person name="Brew K."/>
        </authorList>
    </citation>
    <scope>SEQUENCE REVISION</scope>
</reference>
<reference key="10">
    <citation type="journal article" date="1993" name="Gene">
        <title>Sequence and single-base polymorphisms of the bovine alpha-lactalbumin 5'-flanking region.</title>
        <authorList>
            <person name="Bleck G.T."/>
            <person name="Bremel R.D."/>
        </authorList>
    </citation>
    <scope>NUCLEOTIDE SEQUENCE [GENOMIC DNA] OF 1-22</scope>
</reference>
<reference key="11">
    <citation type="journal article" date="1970" name="J. Biol. Chem.">
        <title>The disulfide bonds of bovine alpha-lactalbumin.</title>
        <authorList>
            <person name="Vanaman T.C."/>
            <person name="Brew K."/>
            <person name="Hill R.L."/>
        </authorList>
    </citation>
    <scope>DISULFIDE BONDS</scope>
</reference>
<reference key="12">
    <citation type="journal article" date="1970" name="Biochim. Biophys. Acta">
        <title>A comparison of bovine alpha-lactalbumin A and B of Droughtmaster.</title>
        <authorList>
            <person name="Bell K."/>
            <person name="Hopper K.E."/>
            <person name="McKenzie H.A."/>
            <person name="Murphy W.H."/>
            <person name="Shaw D.C."/>
        </authorList>
    </citation>
    <scope>PRELIMINARY PROTEIN SEQUENCE (VARIANTS ALLELIC)</scope>
    <source>
        <strain>Droughtmaster</strain>
    </source>
</reference>
<reference key="13">
    <citation type="journal article" date="1968" name="J. Dairy Sci.">
        <title>Amino acid composition of several alpha-lactalbumins.</title>
        <authorList>
            <person name="Gordon W.G."/>
            <person name="Aschaffenburg R."/>
            <person name="Sen A."/>
            <person name="Ghosh S.K."/>
        </authorList>
    </citation>
    <scope>PRELIMINARY PROTEIN SEQUENCE OF 20-142 (VARIANT A)</scope>
    <source>
        <strain>Zebu cattle</strain>
    </source>
</reference>
<reference key="14">
    <citation type="journal article" date="1980" name="Biochem. Biophys. Res. Commun.">
        <title>Alpha-lactalbumin: a calcium metalloprotein.</title>
        <authorList>
            <person name="Hiraoka Y."/>
            <person name="Segawa T."/>
            <person name="Kuwajima K."/>
            <person name="Sugai S."/>
            <person name="Murai N."/>
        </authorList>
    </citation>
    <scope>CALCIUM-BINDING DATA</scope>
</reference>
<reference key="15">
    <citation type="journal article" date="1981" name="J. Biol. Chem.">
        <title>Characteristics of the binding of Ca2+ and other divalent metal ions to bovine alpha-lactalbumin.</title>
        <authorList>
            <person name="Kronman M.J."/>
            <person name="Sinha S.K."/>
            <person name="Brew K."/>
        </authorList>
    </citation>
    <scope>CALCIUM-BINDING DATA</scope>
</reference>
<reference evidence="7" key="16">
    <citation type="journal article" date="1996" name="Structure">
        <title>Crystal structures of guinea-pig, goat and bovine alpha-lactalbumin highlight the enhanced conformational flexibility of regions that are significant for its action in lactose synthase.</title>
        <authorList>
            <person name="Pike A.C.W."/>
            <person name="Brew K."/>
            <person name="Acharya K.R."/>
        </authorList>
    </citation>
    <scope>X-RAY CRYSTALLOGRAPHY (2.3 ANGSTROMS) OF 20-142 IN COMPLEX WITH CALCIUM</scope>
</reference>